<accession>P23918</accession>
<dbReference type="EC" id="3.1.-.-" evidence="2"/>
<dbReference type="EMBL" id="X57925">
    <property type="protein sequence ID" value="CAA41000.1"/>
    <property type="molecule type" value="Genomic_DNA"/>
</dbReference>
<dbReference type="PIR" id="S16683">
    <property type="entry name" value="S16683"/>
</dbReference>
<dbReference type="SMR" id="P23918"/>
<dbReference type="GO" id="GO:0005829">
    <property type="term" value="C:cytosol"/>
    <property type="evidence" value="ECO:0007669"/>
    <property type="project" value="TreeGrafter"/>
</dbReference>
<dbReference type="GO" id="GO:0016788">
    <property type="term" value="F:hydrolase activity, acting on ester bonds"/>
    <property type="evidence" value="ECO:0007669"/>
    <property type="project" value="InterPro"/>
</dbReference>
<dbReference type="Gene3D" id="3.20.20.140">
    <property type="entry name" value="Metal-dependent hydrolases"/>
    <property type="match status" value="1"/>
</dbReference>
<dbReference type="InterPro" id="IPR018228">
    <property type="entry name" value="DNase_TatD-rel_CS"/>
</dbReference>
<dbReference type="InterPro" id="IPR032466">
    <property type="entry name" value="Metal_Hydrolase"/>
</dbReference>
<dbReference type="InterPro" id="IPR001130">
    <property type="entry name" value="TatD-like"/>
</dbReference>
<dbReference type="PANTHER" id="PTHR46124">
    <property type="entry name" value="D-AMINOACYL-TRNA DEACYLASE"/>
    <property type="match status" value="1"/>
</dbReference>
<dbReference type="PANTHER" id="PTHR46124:SF2">
    <property type="entry name" value="D-AMINOACYL-TRNA DEACYLASE"/>
    <property type="match status" value="1"/>
</dbReference>
<dbReference type="Pfam" id="PF01026">
    <property type="entry name" value="TatD_DNase"/>
    <property type="match status" value="1"/>
</dbReference>
<dbReference type="SUPFAM" id="SSF51556">
    <property type="entry name" value="Metallo-dependent hydrolases"/>
    <property type="match status" value="1"/>
</dbReference>
<dbReference type="PROSITE" id="PS01137">
    <property type="entry name" value="TATD_1"/>
    <property type="match status" value="1"/>
</dbReference>
<evidence type="ECO:0000250" key="1">
    <source>
        <dbReference type="UniProtKB" id="P0AFQ7"/>
    </source>
</evidence>
<evidence type="ECO:0000305" key="2"/>
<reference key="1">
    <citation type="journal article" date="1991" name="Nucleic Acids Res.">
        <title>Methionyl-tRNA synthetase from Bacillus stearothermophilus: structural and functional identities with the Escherichia coli enzyme.</title>
        <authorList>
            <person name="Mechulam Y."/>
            <person name="Schmitt E."/>
            <person name="Panvert M."/>
            <person name="Schmitter J.-M."/>
            <person name="Lapadat-Tapolsky M."/>
            <person name="Meinnel T."/>
            <person name="Dessen P."/>
            <person name="Blanquet S."/>
            <person name="Fayat G."/>
        </authorList>
    </citation>
    <scope>NUCLEOTIDE SEQUENCE [GENOMIC DNA]</scope>
    <source>
        <strain>ATCC 1518</strain>
    </source>
</reference>
<feature type="chain" id="PRO_0000202010" description="Uncharacterized metal-dependent hydrolase in metS 3'region">
    <location>
        <begin position="1"/>
        <end position="49" status="greater than"/>
    </location>
</feature>
<feature type="non-terminal residue">
    <location>
        <position position="49"/>
    </location>
</feature>
<sequence>MLFDTHAHLNAVQYEEDLEQVIERARAEGVSHIVVVGFDRPTIDRAIEL</sequence>
<keyword id="KW-0378">Hydrolase</keyword>
<proteinExistence type="inferred from homology"/>
<name>YMES_GEOSE</name>
<organism>
    <name type="scientific">Geobacillus stearothermophilus</name>
    <name type="common">Bacillus stearothermophilus</name>
    <dbReference type="NCBI Taxonomy" id="1422"/>
    <lineage>
        <taxon>Bacteria</taxon>
        <taxon>Bacillati</taxon>
        <taxon>Bacillota</taxon>
        <taxon>Bacilli</taxon>
        <taxon>Bacillales</taxon>
        <taxon>Anoxybacillaceae</taxon>
        <taxon>Geobacillus</taxon>
    </lineage>
</organism>
<comment type="cofactor">
    <cofactor evidence="1">
        <name>a divalent metal cation</name>
        <dbReference type="ChEBI" id="CHEBI:60240"/>
    </cofactor>
    <text evidence="1">Binds 2 divalent metal cations per subunit.</text>
</comment>
<comment type="similarity">
    <text evidence="2">Belongs to the metallo-dependent hydrolases superfamily. TatD-type hydrolase family.</text>
</comment>
<protein>
    <recommendedName>
        <fullName evidence="2">Uncharacterized metal-dependent hydrolase in metS 3'region</fullName>
        <ecNumber evidence="2">3.1.-.-</ecNumber>
    </recommendedName>
</protein>